<reference key="1">
    <citation type="journal article" date="2009" name="PLoS ONE">
        <title>The complete genome of Teredinibacter turnerae T7901: an intracellular endosymbiont of marine wood-boring bivalves (shipworms).</title>
        <authorList>
            <person name="Yang J.C."/>
            <person name="Madupu R."/>
            <person name="Durkin A.S."/>
            <person name="Ekborg N.A."/>
            <person name="Pedamallu C.S."/>
            <person name="Hostetler J.B."/>
            <person name="Radune D."/>
            <person name="Toms B.S."/>
            <person name="Henrissat B."/>
            <person name="Coutinho P.M."/>
            <person name="Schwarz S."/>
            <person name="Field L."/>
            <person name="Trindade-Silva A.E."/>
            <person name="Soares C.A.G."/>
            <person name="Elshahawi S."/>
            <person name="Hanora A."/>
            <person name="Schmidt E.W."/>
            <person name="Haygood M.G."/>
            <person name="Posfai J."/>
            <person name="Benner J."/>
            <person name="Madinger C."/>
            <person name="Nove J."/>
            <person name="Anton B."/>
            <person name="Chaudhary K."/>
            <person name="Foster J."/>
            <person name="Holman A."/>
            <person name="Kumar S."/>
            <person name="Lessard P.A."/>
            <person name="Luyten Y.A."/>
            <person name="Slatko B."/>
            <person name="Wood N."/>
            <person name="Wu B."/>
            <person name="Teplitski M."/>
            <person name="Mougous J.D."/>
            <person name="Ward N."/>
            <person name="Eisen J.A."/>
            <person name="Badger J.H."/>
            <person name="Distel D.L."/>
        </authorList>
    </citation>
    <scope>NUCLEOTIDE SEQUENCE [LARGE SCALE GENOMIC DNA]</scope>
    <source>
        <strain>ATCC 39867 / T7901</strain>
    </source>
</reference>
<proteinExistence type="inferred from homology"/>
<name>UREE_TERTT</name>
<sequence>MLEAYEKAEPGPELEVTDRVVVSFDDRKKSRHRVTTERGVELGWFLERGLVLVDGEILKCTDGTFVRVCAADESVSDVHSDNTLLLTRAAYHLGNRHVPLEVGAGYLRYQHDHVLDDMVRGLGLHVAAARAPFNPENGAYHGTGGHHHHHHDHE</sequence>
<organism>
    <name type="scientific">Teredinibacter turnerae (strain ATCC 39867 / T7901)</name>
    <dbReference type="NCBI Taxonomy" id="377629"/>
    <lineage>
        <taxon>Bacteria</taxon>
        <taxon>Pseudomonadati</taxon>
        <taxon>Pseudomonadota</taxon>
        <taxon>Gammaproteobacteria</taxon>
        <taxon>Cellvibrionales</taxon>
        <taxon>Cellvibrionaceae</taxon>
        <taxon>Teredinibacter</taxon>
    </lineage>
</organism>
<evidence type="ECO:0000255" key="1">
    <source>
        <dbReference type="HAMAP-Rule" id="MF_00822"/>
    </source>
</evidence>
<evidence type="ECO:0000256" key="2">
    <source>
        <dbReference type="SAM" id="MobiDB-lite"/>
    </source>
</evidence>
<accession>C5BUN8</accession>
<protein>
    <recommendedName>
        <fullName evidence="1">Urease accessory protein UreE</fullName>
    </recommendedName>
</protein>
<gene>
    <name evidence="1" type="primary">ureE</name>
    <name type="ordered locus">TERTU_4205</name>
</gene>
<dbReference type="EMBL" id="CP001614">
    <property type="protein sequence ID" value="ACR14345.1"/>
    <property type="molecule type" value="Genomic_DNA"/>
</dbReference>
<dbReference type="RefSeq" id="WP_015820460.1">
    <property type="nucleotide sequence ID" value="NC_012997.1"/>
</dbReference>
<dbReference type="SMR" id="C5BUN8"/>
<dbReference type="STRING" id="377629.TERTU_4205"/>
<dbReference type="KEGG" id="ttu:TERTU_4205"/>
<dbReference type="eggNOG" id="COG2371">
    <property type="taxonomic scope" value="Bacteria"/>
</dbReference>
<dbReference type="HOGENOM" id="CLU_093757_2_0_6"/>
<dbReference type="OrthoDB" id="5421304at2"/>
<dbReference type="Proteomes" id="UP000009080">
    <property type="component" value="Chromosome"/>
</dbReference>
<dbReference type="GO" id="GO:0005737">
    <property type="term" value="C:cytoplasm"/>
    <property type="evidence" value="ECO:0007669"/>
    <property type="project" value="UniProtKB-SubCell"/>
</dbReference>
<dbReference type="GO" id="GO:0016151">
    <property type="term" value="F:nickel cation binding"/>
    <property type="evidence" value="ECO:0007669"/>
    <property type="project" value="UniProtKB-UniRule"/>
</dbReference>
<dbReference type="GO" id="GO:0051082">
    <property type="term" value="F:unfolded protein binding"/>
    <property type="evidence" value="ECO:0007669"/>
    <property type="project" value="UniProtKB-UniRule"/>
</dbReference>
<dbReference type="GO" id="GO:0006457">
    <property type="term" value="P:protein folding"/>
    <property type="evidence" value="ECO:0007669"/>
    <property type="project" value="InterPro"/>
</dbReference>
<dbReference type="GO" id="GO:0065003">
    <property type="term" value="P:protein-containing complex assembly"/>
    <property type="evidence" value="ECO:0007669"/>
    <property type="project" value="InterPro"/>
</dbReference>
<dbReference type="GO" id="GO:0019627">
    <property type="term" value="P:urea metabolic process"/>
    <property type="evidence" value="ECO:0007669"/>
    <property type="project" value="InterPro"/>
</dbReference>
<dbReference type="CDD" id="cd00571">
    <property type="entry name" value="UreE"/>
    <property type="match status" value="1"/>
</dbReference>
<dbReference type="Gene3D" id="2.60.260.20">
    <property type="entry name" value="Urease metallochaperone UreE, N-terminal domain"/>
    <property type="match status" value="1"/>
</dbReference>
<dbReference type="Gene3D" id="3.30.70.790">
    <property type="entry name" value="UreE, C-terminal domain"/>
    <property type="match status" value="1"/>
</dbReference>
<dbReference type="HAMAP" id="MF_00822">
    <property type="entry name" value="UreE"/>
    <property type="match status" value="1"/>
</dbReference>
<dbReference type="InterPro" id="IPR012406">
    <property type="entry name" value="UreE"/>
</dbReference>
<dbReference type="InterPro" id="IPR007864">
    <property type="entry name" value="UreE_C_dom"/>
</dbReference>
<dbReference type="InterPro" id="IPR004029">
    <property type="entry name" value="UreE_N"/>
</dbReference>
<dbReference type="InterPro" id="IPR036118">
    <property type="entry name" value="UreE_N_sf"/>
</dbReference>
<dbReference type="NCBIfam" id="NF009751">
    <property type="entry name" value="PRK13261.1-1"/>
    <property type="match status" value="1"/>
</dbReference>
<dbReference type="Pfam" id="PF05194">
    <property type="entry name" value="UreE_C"/>
    <property type="match status" value="1"/>
</dbReference>
<dbReference type="Pfam" id="PF02814">
    <property type="entry name" value="UreE_N"/>
    <property type="match status" value="1"/>
</dbReference>
<dbReference type="PIRSF" id="PIRSF036402">
    <property type="entry name" value="Ureas_acces_UreE"/>
    <property type="match status" value="1"/>
</dbReference>
<dbReference type="SMART" id="SM00988">
    <property type="entry name" value="UreE_N"/>
    <property type="match status" value="1"/>
</dbReference>
<dbReference type="SUPFAM" id="SSF69737">
    <property type="entry name" value="Urease metallochaperone UreE, C-terminal domain"/>
    <property type="match status" value="1"/>
</dbReference>
<dbReference type="SUPFAM" id="SSF69287">
    <property type="entry name" value="Urease metallochaperone UreE, N-terminal domain"/>
    <property type="match status" value="1"/>
</dbReference>
<comment type="function">
    <text evidence="1">Involved in urease metallocenter assembly. Binds nickel. Probably functions as a nickel donor during metallocenter assembly.</text>
</comment>
<comment type="subcellular location">
    <subcellularLocation>
        <location evidence="1">Cytoplasm</location>
    </subcellularLocation>
</comment>
<comment type="similarity">
    <text evidence="1">Belongs to the UreE family.</text>
</comment>
<keyword id="KW-0143">Chaperone</keyword>
<keyword id="KW-0963">Cytoplasm</keyword>
<keyword id="KW-0533">Nickel</keyword>
<keyword id="KW-1185">Reference proteome</keyword>
<feature type="chain" id="PRO_1000213120" description="Urease accessory protein UreE">
    <location>
        <begin position="1"/>
        <end position="154"/>
    </location>
</feature>
<feature type="region of interest" description="Disordered" evidence="2">
    <location>
        <begin position="135"/>
        <end position="154"/>
    </location>
</feature>
<feature type="compositionally biased region" description="Basic residues" evidence="2">
    <location>
        <begin position="144"/>
        <end position="154"/>
    </location>
</feature>